<keyword id="KW-0067">ATP-binding</keyword>
<keyword id="KW-0436">Ligase</keyword>
<keyword id="KW-0460">Magnesium</keyword>
<keyword id="KW-0479">Metal-binding</keyword>
<keyword id="KW-0547">Nucleotide-binding</keyword>
<keyword id="KW-0658">Purine biosynthesis</keyword>
<dbReference type="EC" id="6.3.1.21" evidence="1"/>
<dbReference type="EMBL" id="CP000742">
    <property type="protein sequence ID" value="ABR55028.1"/>
    <property type="molecule type" value="Genomic_DNA"/>
</dbReference>
<dbReference type="RefSeq" id="WP_012065943.1">
    <property type="nucleotide sequence ID" value="NC_009634.1"/>
</dbReference>
<dbReference type="SMR" id="A6URA6"/>
<dbReference type="STRING" id="406327.Mevan_1128"/>
<dbReference type="GeneID" id="5326045"/>
<dbReference type="KEGG" id="mvn:Mevan_1128"/>
<dbReference type="eggNOG" id="arCOG01598">
    <property type="taxonomic scope" value="Archaea"/>
</dbReference>
<dbReference type="HOGENOM" id="CLU_011534_1_3_2"/>
<dbReference type="OrthoDB" id="9299at2157"/>
<dbReference type="UniPathway" id="UPA00074">
    <property type="reaction ID" value="UER00127"/>
</dbReference>
<dbReference type="Proteomes" id="UP000001107">
    <property type="component" value="Chromosome"/>
</dbReference>
<dbReference type="GO" id="GO:0005829">
    <property type="term" value="C:cytosol"/>
    <property type="evidence" value="ECO:0007669"/>
    <property type="project" value="TreeGrafter"/>
</dbReference>
<dbReference type="GO" id="GO:0005524">
    <property type="term" value="F:ATP binding"/>
    <property type="evidence" value="ECO:0007669"/>
    <property type="project" value="UniProtKB-UniRule"/>
</dbReference>
<dbReference type="GO" id="GO:0000287">
    <property type="term" value="F:magnesium ion binding"/>
    <property type="evidence" value="ECO:0007669"/>
    <property type="project" value="InterPro"/>
</dbReference>
<dbReference type="GO" id="GO:0043815">
    <property type="term" value="F:phosphoribosylglycinamide formyltransferase 2 activity"/>
    <property type="evidence" value="ECO:0007669"/>
    <property type="project" value="UniProtKB-UniRule"/>
</dbReference>
<dbReference type="GO" id="GO:0004644">
    <property type="term" value="F:phosphoribosylglycinamide formyltransferase activity"/>
    <property type="evidence" value="ECO:0007669"/>
    <property type="project" value="InterPro"/>
</dbReference>
<dbReference type="GO" id="GO:0006189">
    <property type="term" value="P:'de novo' IMP biosynthetic process"/>
    <property type="evidence" value="ECO:0007669"/>
    <property type="project" value="UniProtKB-UniRule"/>
</dbReference>
<dbReference type="FunFam" id="3.40.50.20:FF:000007">
    <property type="entry name" value="Formate-dependent phosphoribosylglycinamide formyltransferase"/>
    <property type="match status" value="1"/>
</dbReference>
<dbReference type="Gene3D" id="3.40.50.20">
    <property type="match status" value="1"/>
</dbReference>
<dbReference type="Gene3D" id="3.30.1490.20">
    <property type="entry name" value="ATP-grasp fold, A domain"/>
    <property type="match status" value="1"/>
</dbReference>
<dbReference type="Gene3D" id="3.30.470.20">
    <property type="entry name" value="ATP-grasp fold, B domain"/>
    <property type="match status" value="1"/>
</dbReference>
<dbReference type="HAMAP" id="MF_01643">
    <property type="entry name" value="PurT"/>
    <property type="match status" value="1"/>
</dbReference>
<dbReference type="InterPro" id="IPR011761">
    <property type="entry name" value="ATP-grasp"/>
</dbReference>
<dbReference type="InterPro" id="IPR003135">
    <property type="entry name" value="ATP-grasp_carboxylate-amine"/>
</dbReference>
<dbReference type="InterPro" id="IPR013815">
    <property type="entry name" value="ATP_grasp_subdomain_1"/>
</dbReference>
<dbReference type="InterPro" id="IPR016185">
    <property type="entry name" value="PreATP-grasp_dom_sf"/>
</dbReference>
<dbReference type="InterPro" id="IPR005862">
    <property type="entry name" value="PurT"/>
</dbReference>
<dbReference type="InterPro" id="IPR054350">
    <property type="entry name" value="PurT/PurK_preATP-grasp"/>
</dbReference>
<dbReference type="InterPro" id="IPR048740">
    <property type="entry name" value="PurT_C"/>
</dbReference>
<dbReference type="InterPro" id="IPR011054">
    <property type="entry name" value="Rudment_hybrid_motif"/>
</dbReference>
<dbReference type="NCBIfam" id="NF006766">
    <property type="entry name" value="PRK09288.1"/>
    <property type="match status" value="1"/>
</dbReference>
<dbReference type="NCBIfam" id="TIGR01142">
    <property type="entry name" value="purT"/>
    <property type="match status" value="1"/>
</dbReference>
<dbReference type="PANTHER" id="PTHR43055">
    <property type="entry name" value="FORMATE-DEPENDENT PHOSPHORIBOSYLGLYCINAMIDE FORMYLTRANSFERASE"/>
    <property type="match status" value="1"/>
</dbReference>
<dbReference type="PANTHER" id="PTHR43055:SF1">
    <property type="entry name" value="FORMATE-DEPENDENT PHOSPHORIBOSYLGLYCINAMIDE FORMYLTRANSFERASE"/>
    <property type="match status" value="1"/>
</dbReference>
<dbReference type="Pfam" id="PF02222">
    <property type="entry name" value="ATP-grasp"/>
    <property type="match status" value="1"/>
</dbReference>
<dbReference type="Pfam" id="PF21244">
    <property type="entry name" value="PurT_C"/>
    <property type="match status" value="1"/>
</dbReference>
<dbReference type="Pfam" id="PF22660">
    <property type="entry name" value="RS_preATP-grasp-like"/>
    <property type="match status" value="1"/>
</dbReference>
<dbReference type="SUPFAM" id="SSF56059">
    <property type="entry name" value="Glutathione synthetase ATP-binding domain-like"/>
    <property type="match status" value="1"/>
</dbReference>
<dbReference type="SUPFAM" id="SSF52440">
    <property type="entry name" value="PreATP-grasp domain"/>
    <property type="match status" value="1"/>
</dbReference>
<dbReference type="SUPFAM" id="SSF51246">
    <property type="entry name" value="Rudiment single hybrid motif"/>
    <property type="match status" value="1"/>
</dbReference>
<dbReference type="PROSITE" id="PS50975">
    <property type="entry name" value="ATP_GRASP"/>
    <property type="match status" value="1"/>
</dbReference>
<reference key="1">
    <citation type="submission" date="2007-06" db="EMBL/GenBank/DDBJ databases">
        <title>Complete sequence of Methanococcus vannielii SB.</title>
        <authorList>
            <consortium name="US DOE Joint Genome Institute"/>
            <person name="Copeland A."/>
            <person name="Lucas S."/>
            <person name="Lapidus A."/>
            <person name="Barry K."/>
            <person name="Glavina del Rio T."/>
            <person name="Dalin E."/>
            <person name="Tice H."/>
            <person name="Pitluck S."/>
            <person name="Chain P."/>
            <person name="Malfatti S."/>
            <person name="Shin M."/>
            <person name="Vergez L."/>
            <person name="Schmutz J."/>
            <person name="Larimer F."/>
            <person name="Land M."/>
            <person name="Hauser L."/>
            <person name="Kyrpides N."/>
            <person name="Anderson I."/>
            <person name="Sieprawska-Lupa M."/>
            <person name="Whitman W.B."/>
            <person name="Richardson P."/>
        </authorList>
    </citation>
    <scope>NUCLEOTIDE SEQUENCE [LARGE SCALE GENOMIC DNA]</scope>
    <source>
        <strain>ATCC 35089 / DSM 1224 / JCM 13029 / OCM 148 / SB</strain>
    </source>
</reference>
<evidence type="ECO:0000255" key="1">
    <source>
        <dbReference type="HAMAP-Rule" id="MF_01643"/>
    </source>
</evidence>
<organism>
    <name type="scientific">Methanococcus vannielii (strain ATCC 35089 / DSM 1224 / JCM 13029 / OCM 148 / SB)</name>
    <dbReference type="NCBI Taxonomy" id="406327"/>
    <lineage>
        <taxon>Archaea</taxon>
        <taxon>Methanobacteriati</taxon>
        <taxon>Methanobacteriota</taxon>
        <taxon>Methanomada group</taxon>
        <taxon>Methanococci</taxon>
        <taxon>Methanococcales</taxon>
        <taxon>Methanococcaceae</taxon>
        <taxon>Methanococcus</taxon>
    </lineage>
</organism>
<comment type="function">
    <text evidence="1">Involved in the de novo purine biosynthesis. Catalyzes the transfer of formate to 5-phospho-ribosyl-glycinamide (GAR), producing 5-phospho-ribosyl-N-formylglycinamide (FGAR). Formate is provided by PurU via hydrolysis of 10-formyl-tetrahydrofolate.</text>
</comment>
<comment type="catalytic activity">
    <reaction evidence="1">
        <text>N(1)-(5-phospho-beta-D-ribosyl)glycinamide + formate + ATP = N(2)-formyl-N(1)-(5-phospho-beta-D-ribosyl)glycinamide + ADP + phosphate + H(+)</text>
        <dbReference type="Rhea" id="RHEA:24829"/>
        <dbReference type="ChEBI" id="CHEBI:15378"/>
        <dbReference type="ChEBI" id="CHEBI:15740"/>
        <dbReference type="ChEBI" id="CHEBI:30616"/>
        <dbReference type="ChEBI" id="CHEBI:43474"/>
        <dbReference type="ChEBI" id="CHEBI:143788"/>
        <dbReference type="ChEBI" id="CHEBI:147286"/>
        <dbReference type="ChEBI" id="CHEBI:456216"/>
        <dbReference type="EC" id="6.3.1.21"/>
    </reaction>
    <physiologicalReaction direction="left-to-right" evidence="1">
        <dbReference type="Rhea" id="RHEA:24830"/>
    </physiologicalReaction>
</comment>
<comment type="pathway">
    <text evidence="1">Purine metabolism; IMP biosynthesis via de novo pathway; N(2)-formyl-N(1)-(5-phospho-D-ribosyl)glycinamide from N(1)-(5-phospho-D-ribosyl)glycinamide (formate route): step 1/1.</text>
</comment>
<comment type="subunit">
    <text evidence="1">Homodimer.</text>
</comment>
<comment type="similarity">
    <text evidence="1">Belongs to the PurK/PurT family.</text>
</comment>
<name>PURT_METVS</name>
<accession>A6URA6</accession>
<gene>
    <name evidence="1" type="primary">purT</name>
    <name type="ordered locus">Mevan_1128</name>
</gene>
<sequence length="388" mass="42976">MVGTPLFSNAKKILLLGSGELGKEVIIEAQRLGVECIAVDSYENAPAMQVAHRYHVIDMKDSGSLRAVIEREKPDLIVPEIEAINTDTLKEMETEGYHVVPTANAAKLTMDREGIRRLASEKLGLRTAKYEFADSLDELKEAVKRIGIPCIIKPIMSSSGKGQSTVKSEFDIEKSWDYAKSATRGIGTKVIVEEFVNFDYEITLLTARTAFGTKFCEPIGHIQIDGDYHESWQPHPMCSPTKAKAQEVAKKITDELGGYGIFGVELFIMDDEVIFSEVSPRPHDTGMVTMVTQKMSEFEIHVRSILGLPVNVDLSYPGASYVIKSEIYKWAPEYDIIEASKLKDTKIRLFGKPVAKIGRRMGVALSTAEDVSVARDTAKKAANIVKIK</sequence>
<feature type="chain" id="PRO_0000319282" description="Formate-dependent phosphoribosylglycinamide formyltransferase">
    <location>
        <begin position="1"/>
        <end position="388"/>
    </location>
</feature>
<feature type="domain" description="ATP-grasp" evidence="1">
    <location>
        <begin position="117"/>
        <end position="306"/>
    </location>
</feature>
<feature type="binding site" evidence="1">
    <location>
        <begin position="20"/>
        <end position="21"/>
    </location>
    <ligand>
        <name>N(1)-(5-phospho-beta-D-ribosyl)glycinamide</name>
        <dbReference type="ChEBI" id="CHEBI:143788"/>
    </ligand>
</feature>
<feature type="binding site" evidence="1">
    <location>
        <position position="80"/>
    </location>
    <ligand>
        <name>N(1)-(5-phospho-beta-D-ribosyl)glycinamide</name>
        <dbReference type="ChEBI" id="CHEBI:143788"/>
    </ligand>
</feature>
<feature type="binding site" evidence="1">
    <location>
        <position position="112"/>
    </location>
    <ligand>
        <name>ATP</name>
        <dbReference type="ChEBI" id="CHEBI:30616"/>
    </ligand>
</feature>
<feature type="binding site" evidence="1">
    <location>
        <position position="153"/>
    </location>
    <ligand>
        <name>ATP</name>
        <dbReference type="ChEBI" id="CHEBI:30616"/>
    </ligand>
</feature>
<feature type="binding site" evidence="1">
    <location>
        <begin position="158"/>
        <end position="163"/>
    </location>
    <ligand>
        <name>ATP</name>
        <dbReference type="ChEBI" id="CHEBI:30616"/>
    </ligand>
</feature>
<feature type="binding site" evidence="1">
    <location>
        <begin position="193"/>
        <end position="196"/>
    </location>
    <ligand>
        <name>ATP</name>
        <dbReference type="ChEBI" id="CHEBI:30616"/>
    </ligand>
</feature>
<feature type="binding site" evidence="1">
    <location>
        <position position="201"/>
    </location>
    <ligand>
        <name>ATP</name>
        <dbReference type="ChEBI" id="CHEBI:30616"/>
    </ligand>
</feature>
<feature type="binding site" evidence="1">
    <location>
        <position position="265"/>
    </location>
    <ligand>
        <name>Mg(2+)</name>
        <dbReference type="ChEBI" id="CHEBI:18420"/>
    </ligand>
</feature>
<feature type="binding site" evidence="1">
    <location>
        <position position="277"/>
    </location>
    <ligand>
        <name>Mg(2+)</name>
        <dbReference type="ChEBI" id="CHEBI:18420"/>
    </ligand>
</feature>
<feature type="binding site" evidence="1">
    <location>
        <position position="284"/>
    </location>
    <ligand>
        <name>N(1)-(5-phospho-beta-D-ribosyl)glycinamide</name>
        <dbReference type="ChEBI" id="CHEBI:143788"/>
    </ligand>
</feature>
<feature type="binding site" evidence="1">
    <location>
        <position position="352"/>
    </location>
    <ligand>
        <name>N(1)-(5-phospho-beta-D-ribosyl)glycinamide</name>
        <dbReference type="ChEBI" id="CHEBI:143788"/>
    </ligand>
</feature>
<feature type="binding site" evidence="1">
    <location>
        <begin position="359"/>
        <end position="360"/>
    </location>
    <ligand>
        <name>N(1)-(5-phospho-beta-D-ribosyl)glycinamide</name>
        <dbReference type="ChEBI" id="CHEBI:143788"/>
    </ligand>
</feature>
<protein>
    <recommendedName>
        <fullName evidence="1">Formate-dependent phosphoribosylglycinamide formyltransferase</fullName>
        <ecNumber evidence="1">6.3.1.21</ecNumber>
    </recommendedName>
    <alternativeName>
        <fullName evidence="1">5'-phosphoribosylglycinamide transformylase 2</fullName>
    </alternativeName>
    <alternativeName>
        <fullName evidence="1">Formate-dependent GAR transformylase</fullName>
    </alternativeName>
    <alternativeName>
        <fullName evidence="1">GAR transformylase 2</fullName>
        <shortName evidence="1">GART 2</shortName>
    </alternativeName>
    <alternativeName>
        <fullName evidence="1">Non-folate glycinamide ribonucleotide transformylase</fullName>
    </alternativeName>
    <alternativeName>
        <fullName evidence="1">Phosphoribosylglycinamide formyltransferase 2</fullName>
    </alternativeName>
</protein>
<proteinExistence type="inferred from homology"/>